<gene>
    <name evidence="1" type="primary">hemF</name>
    <name type="ordered locus">BMEI0467</name>
</gene>
<reference key="1">
    <citation type="journal article" date="2002" name="Proc. Natl. Acad. Sci. U.S.A.">
        <title>The genome sequence of the facultative intracellular pathogen Brucella melitensis.</title>
        <authorList>
            <person name="DelVecchio V.G."/>
            <person name="Kapatral V."/>
            <person name="Redkar R.J."/>
            <person name="Patra G."/>
            <person name="Mujer C."/>
            <person name="Los T."/>
            <person name="Ivanova N."/>
            <person name="Anderson I."/>
            <person name="Bhattacharyya A."/>
            <person name="Lykidis A."/>
            <person name="Reznik G."/>
            <person name="Jablonski L."/>
            <person name="Larsen N."/>
            <person name="D'Souza M."/>
            <person name="Bernal A."/>
            <person name="Mazur M."/>
            <person name="Goltsman E."/>
            <person name="Selkov E."/>
            <person name="Elzer P.H."/>
            <person name="Hagius S."/>
            <person name="O'Callaghan D."/>
            <person name="Letesson J.-J."/>
            <person name="Haselkorn R."/>
            <person name="Kyrpides N.C."/>
            <person name="Overbeek R."/>
        </authorList>
    </citation>
    <scope>NUCLEOTIDE SEQUENCE [LARGE SCALE GENOMIC DNA]</scope>
    <source>
        <strain>ATCC 23456 / CCUG 17765 / NCTC 10094 / 16M</strain>
    </source>
</reference>
<name>HEM6_BRUME</name>
<protein>
    <recommendedName>
        <fullName evidence="1">Oxygen-dependent coproporphyrinogen-III oxidase</fullName>
        <shortName evidence="1">CPO</shortName>
        <shortName evidence="1">Coprogen oxidase</shortName>
        <shortName evidence="1">Coproporphyrinogenase</shortName>
        <ecNumber evidence="1">1.3.3.3</ecNumber>
    </recommendedName>
</protein>
<comment type="function">
    <text evidence="1">Involved in the heme biosynthesis. Catalyzes the aerobic oxidative decarboxylation of propionate groups of rings A and B of coproporphyrinogen-III to yield the vinyl groups in protoporphyrinogen-IX.</text>
</comment>
<comment type="catalytic activity">
    <reaction evidence="1">
        <text>coproporphyrinogen III + O2 + 2 H(+) = protoporphyrinogen IX + 2 CO2 + 2 H2O</text>
        <dbReference type="Rhea" id="RHEA:18257"/>
        <dbReference type="ChEBI" id="CHEBI:15377"/>
        <dbReference type="ChEBI" id="CHEBI:15378"/>
        <dbReference type="ChEBI" id="CHEBI:15379"/>
        <dbReference type="ChEBI" id="CHEBI:16526"/>
        <dbReference type="ChEBI" id="CHEBI:57307"/>
        <dbReference type="ChEBI" id="CHEBI:57309"/>
        <dbReference type="EC" id="1.3.3.3"/>
    </reaction>
</comment>
<comment type="cofactor">
    <cofactor evidence="1">
        <name>a divalent metal cation</name>
        <dbReference type="ChEBI" id="CHEBI:60240"/>
    </cofactor>
</comment>
<comment type="pathway">
    <text evidence="1">Porphyrin-containing compound metabolism; protoporphyrin-IX biosynthesis; protoporphyrinogen-IX from coproporphyrinogen-III (O2 route): step 1/1.</text>
</comment>
<comment type="subunit">
    <text evidence="1">Homodimer.</text>
</comment>
<comment type="subcellular location">
    <subcellularLocation>
        <location evidence="1">Cytoplasm</location>
    </subcellularLocation>
</comment>
<comment type="similarity">
    <text evidence="1">Belongs to the aerobic coproporphyrinogen-III oxidase family.</text>
</comment>
<comment type="sequence caution" evidence="3">
    <conflict type="erroneous initiation">
        <sequence resource="EMBL-CDS" id="AAL51648"/>
    </conflict>
    <text>Extended N-terminus.</text>
</comment>
<proteinExistence type="inferred from homology"/>
<evidence type="ECO:0000255" key="1">
    <source>
        <dbReference type="HAMAP-Rule" id="MF_00333"/>
    </source>
</evidence>
<evidence type="ECO:0000256" key="2">
    <source>
        <dbReference type="SAM" id="MobiDB-lite"/>
    </source>
</evidence>
<evidence type="ECO:0000305" key="3"/>
<organism>
    <name type="scientific">Brucella melitensis biotype 1 (strain ATCC 23456 / CCUG 17765 / NCTC 10094 / 16M)</name>
    <dbReference type="NCBI Taxonomy" id="224914"/>
    <lineage>
        <taxon>Bacteria</taxon>
        <taxon>Pseudomonadati</taxon>
        <taxon>Pseudomonadota</taxon>
        <taxon>Alphaproteobacteria</taxon>
        <taxon>Hyphomicrobiales</taxon>
        <taxon>Brucellaceae</taxon>
        <taxon>Brucella/Ochrobactrum group</taxon>
        <taxon>Brucella</taxon>
    </lineage>
</organism>
<feature type="chain" id="PRO_0000109887" description="Oxygen-dependent coproporphyrinogen-III oxidase">
    <location>
        <begin position="1"/>
        <end position="303"/>
    </location>
</feature>
<feature type="region of interest" description="Disordered" evidence="2">
    <location>
        <begin position="43"/>
        <end position="62"/>
    </location>
</feature>
<feature type="region of interest" description="Important for dimerization" evidence="1">
    <location>
        <begin position="268"/>
        <end position="303"/>
    </location>
</feature>
<feature type="compositionally biased region" description="Basic and acidic residues" evidence="2">
    <location>
        <begin position="48"/>
        <end position="62"/>
    </location>
</feature>
<feature type="active site" description="Proton donor" evidence="1">
    <location>
        <position position="130"/>
    </location>
</feature>
<feature type="binding site" evidence="1">
    <location>
        <position position="116"/>
    </location>
    <ligand>
        <name>substrate</name>
    </ligand>
</feature>
<feature type="binding site" evidence="1">
    <location>
        <position position="120"/>
    </location>
    <ligand>
        <name>a divalent metal cation</name>
        <dbReference type="ChEBI" id="CHEBI:60240"/>
    </ligand>
</feature>
<feature type="binding site" evidence="1">
    <location>
        <position position="130"/>
    </location>
    <ligand>
        <name>a divalent metal cation</name>
        <dbReference type="ChEBI" id="CHEBI:60240"/>
    </ligand>
</feature>
<feature type="binding site" evidence="1">
    <location>
        <begin position="132"/>
        <end position="134"/>
    </location>
    <ligand>
        <name>substrate</name>
    </ligand>
</feature>
<feature type="binding site" evidence="1">
    <location>
        <position position="168"/>
    </location>
    <ligand>
        <name>a divalent metal cation</name>
        <dbReference type="ChEBI" id="CHEBI:60240"/>
    </ligand>
</feature>
<feature type="binding site" evidence="1">
    <location>
        <position position="199"/>
    </location>
    <ligand>
        <name>a divalent metal cation</name>
        <dbReference type="ChEBI" id="CHEBI:60240"/>
    </ligand>
</feature>
<feature type="binding site" evidence="1">
    <location>
        <begin position="286"/>
        <end position="288"/>
    </location>
    <ligand>
        <name>substrate</name>
    </ligand>
</feature>
<feature type="site" description="Important for dimerization" evidence="1">
    <location>
        <position position="199"/>
    </location>
</feature>
<accession>P63850</accession>
<accession>Q8YIH7</accession>
<dbReference type="EC" id="1.3.3.3" evidence="1"/>
<dbReference type="EMBL" id="AE008917">
    <property type="protein sequence ID" value="AAL51648.1"/>
    <property type="status" value="ALT_INIT"/>
    <property type="molecule type" value="Genomic_DNA"/>
</dbReference>
<dbReference type="PIR" id="AE3310">
    <property type="entry name" value="AE3310"/>
</dbReference>
<dbReference type="RefSeq" id="WP_002964654.1">
    <property type="nucleotide sequence ID" value="NZ_GG703780.1"/>
</dbReference>
<dbReference type="SMR" id="P63850"/>
<dbReference type="GeneID" id="97533266"/>
<dbReference type="KEGG" id="bme:BMEI0467"/>
<dbReference type="KEGG" id="bmel:DK63_956"/>
<dbReference type="PATRIC" id="fig|224914.52.peg.1010"/>
<dbReference type="eggNOG" id="COG0408">
    <property type="taxonomic scope" value="Bacteria"/>
</dbReference>
<dbReference type="PhylomeDB" id="P63850"/>
<dbReference type="UniPathway" id="UPA00251">
    <property type="reaction ID" value="UER00322"/>
</dbReference>
<dbReference type="Proteomes" id="UP000000419">
    <property type="component" value="Chromosome I"/>
</dbReference>
<dbReference type="GO" id="GO:0005737">
    <property type="term" value="C:cytoplasm"/>
    <property type="evidence" value="ECO:0007669"/>
    <property type="project" value="UniProtKB-SubCell"/>
</dbReference>
<dbReference type="GO" id="GO:0004109">
    <property type="term" value="F:coproporphyrinogen oxidase activity"/>
    <property type="evidence" value="ECO:0007669"/>
    <property type="project" value="UniProtKB-UniRule"/>
</dbReference>
<dbReference type="GO" id="GO:0046872">
    <property type="term" value="F:metal ion binding"/>
    <property type="evidence" value="ECO:0007669"/>
    <property type="project" value="UniProtKB-KW"/>
</dbReference>
<dbReference type="GO" id="GO:0042803">
    <property type="term" value="F:protein homodimerization activity"/>
    <property type="evidence" value="ECO:0000250"/>
    <property type="project" value="UniProtKB"/>
</dbReference>
<dbReference type="GO" id="GO:0006782">
    <property type="term" value="P:protoporphyrinogen IX biosynthetic process"/>
    <property type="evidence" value="ECO:0007669"/>
    <property type="project" value="UniProtKB-UniRule"/>
</dbReference>
<dbReference type="FunFam" id="3.40.1500.10:FF:000005">
    <property type="entry name" value="Oxygen-dependent coproporphyrinogen-III oxidase"/>
    <property type="match status" value="1"/>
</dbReference>
<dbReference type="Gene3D" id="3.40.1500.10">
    <property type="entry name" value="Coproporphyrinogen III oxidase, aerobic"/>
    <property type="match status" value="1"/>
</dbReference>
<dbReference type="HAMAP" id="MF_00333">
    <property type="entry name" value="Coprogen_oxidas"/>
    <property type="match status" value="1"/>
</dbReference>
<dbReference type="InterPro" id="IPR001260">
    <property type="entry name" value="Coprogen_oxidase_aer"/>
</dbReference>
<dbReference type="InterPro" id="IPR036406">
    <property type="entry name" value="Coprogen_oxidase_aer_sf"/>
</dbReference>
<dbReference type="InterPro" id="IPR018375">
    <property type="entry name" value="Coprogen_oxidase_CS"/>
</dbReference>
<dbReference type="NCBIfam" id="NF003727">
    <property type="entry name" value="PRK05330.1"/>
    <property type="match status" value="1"/>
</dbReference>
<dbReference type="PANTHER" id="PTHR10755">
    <property type="entry name" value="COPROPORPHYRINOGEN III OXIDASE, MITOCHONDRIAL"/>
    <property type="match status" value="1"/>
</dbReference>
<dbReference type="PANTHER" id="PTHR10755:SF0">
    <property type="entry name" value="OXYGEN-DEPENDENT COPROPORPHYRINOGEN-III OXIDASE, MITOCHONDRIAL"/>
    <property type="match status" value="1"/>
</dbReference>
<dbReference type="Pfam" id="PF01218">
    <property type="entry name" value="Coprogen_oxidas"/>
    <property type="match status" value="1"/>
</dbReference>
<dbReference type="PIRSF" id="PIRSF000166">
    <property type="entry name" value="Coproporphyri_ox"/>
    <property type="match status" value="1"/>
</dbReference>
<dbReference type="PRINTS" id="PR00073">
    <property type="entry name" value="COPRGNOXDASE"/>
</dbReference>
<dbReference type="SUPFAM" id="SSF102886">
    <property type="entry name" value="Coproporphyrinogen III oxidase"/>
    <property type="match status" value="1"/>
</dbReference>
<dbReference type="PROSITE" id="PS01021">
    <property type="entry name" value="COPROGEN_OXIDASE"/>
    <property type="match status" value="1"/>
</dbReference>
<sequence>MKREDIPAIIPADIEEKKKAAQSWFEELRDRICASYEQLEDELQGPLSDREPGRFVRTPWQKDDGNGGGVMSIMHGRVFEKVGVHVSTVHGEFSPEFRKQIPGAEEDPRYWASGISLIAHPQNPNVPAVHMNTRMIVTTRQWFAGGADLTPVLDRRRTQEDPDTLAFHKAFRFICEKHKDIVDYQRLKEWCDEYFFLPHRDEPRGIGGIFYDWLHSPEEKGGWDSDFAFTRDVGRGFSVVYPHLVRQNFNKDWTEADRDEQLIRRGRYVEFNLLYDRGTIFGLKTGGNMNAILSSMPPVVKWP</sequence>
<keyword id="KW-0963">Cytoplasm</keyword>
<keyword id="KW-0350">Heme biosynthesis</keyword>
<keyword id="KW-0479">Metal-binding</keyword>
<keyword id="KW-0560">Oxidoreductase</keyword>
<keyword id="KW-0627">Porphyrin biosynthesis</keyword>